<feature type="chain" id="PRO_0000283985" description="Elongator complex protein 3">
    <location>
        <begin position="1"/>
        <end position="547"/>
    </location>
</feature>
<feature type="domain" description="Radical SAM core" evidence="7">
    <location>
        <begin position="82"/>
        <end position="372"/>
    </location>
</feature>
<feature type="domain" description="N-acetyltransferase" evidence="6">
    <location>
        <begin position="396"/>
        <end position="547"/>
    </location>
</feature>
<feature type="binding site" evidence="3">
    <location>
        <position position="99"/>
    </location>
    <ligand>
        <name>[4Fe-4S] cluster</name>
        <dbReference type="ChEBI" id="CHEBI:49883"/>
        <note>4Fe-4S-S-AdoMet</note>
    </ligand>
</feature>
<feature type="binding site" evidence="3">
    <location>
        <position position="109"/>
    </location>
    <ligand>
        <name>[4Fe-4S] cluster</name>
        <dbReference type="ChEBI" id="CHEBI:49883"/>
        <note>4Fe-4S-S-AdoMet</note>
    </ligand>
</feature>
<feature type="binding site" evidence="3">
    <location>
        <position position="112"/>
    </location>
    <ligand>
        <name>[4Fe-4S] cluster</name>
        <dbReference type="ChEBI" id="CHEBI:49883"/>
        <note>4Fe-4S-S-AdoMet</note>
    </ligand>
</feature>
<feature type="binding site" evidence="1">
    <location>
        <position position="164"/>
    </location>
    <ligand>
        <name>acetyl-CoA</name>
        <dbReference type="ChEBI" id="CHEBI:57288"/>
    </ligand>
</feature>
<feature type="binding site" evidence="1">
    <location>
        <begin position="474"/>
        <end position="477"/>
    </location>
    <ligand>
        <name>acetyl-CoA</name>
        <dbReference type="ChEBI" id="CHEBI:57288"/>
    </ligand>
</feature>
<feature type="binding site" evidence="1">
    <location>
        <begin position="497"/>
        <end position="499"/>
    </location>
    <ligand>
        <name>acetyl-CoA</name>
        <dbReference type="ChEBI" id="CHEBI:57288"/>
    </ligand>
</feature>
<feature type="binding site" evidence="1">
    <location>
        <position position="530"/>
    </location>
    <ligand>
        <name>acetyl-CoA</name>
        <dbReference type="ChEBI" id="CHEBI:57288"/>
    </ligand>
</feature>
<feature type="modified residue" description="Phosphoserine" evidence="4">
    <location>
        <position position="161"/>
    </location>
</feature>
<feature type="modified residue" description="Phosphotyrosine" evidence="5">
    <location>
        <position position="202"/>
    </location>
</feature>
<feature type="modified residue" description="N6-methyllysine" evidence="5">
    <location>
        <position position="229"/>
    </location>
</feature>
<feature type="modified residue" description="Phosphotyrosine" evidence="5">
    <location>
        <position position="251"/>
    </location>
</feature>
<name>ELP3_BOVIN</name>
<protein>
    <recommendedName>
        <fullName evidence="5">Elongator complex protein 3</fullName>
        <ecNumber evidence="2">2.3.1.311</ecNumber>
    </recommendedName>
    <alternativeName>
        <fullName evidence="8">tRNA uridine(34) acetyltransferase</fullName>
    </alternativeName>
</protein>
<keyword id="KW-0004">4Fe-4S</keyword>
<keyword id="KW-0012">Acyltransferase</keyword>
<keyword id="KW-0963">Cytoplasm</keyword>
<keyword id="KW-0408">Iron</keyword>
<keyword id="KW-0411">Iron-sulfur</keyword>
<keyword id="KW-0479">Metal-binding</keyword>
<keyword id="KW-0488">Methylation</keyword>
<keyword id="KW-0524">Neurogenesis</keyword>
<keyword id="KW-0539">Nucleus</keyword>
<keyword id="KW-0597">Phosphoprotein</keyword>
<keyword id="KW-1185">Reference proteome</keyword>
<keyword id="KW-0694">RNA-binding</keyword>
<keyword id="KW-0949">S-adenosyl-L-methionine</keyword>
<keyword id="KW-0808">Transferase</keyword>
<keyword id="KW-0819">tRNA processing</keyword>
<keyword id="KW-0820">tRNA-binding</keyword>
<comment type="function">
    <text evidence="2 4 5">Catalytic tRNA acetyltransferase subunit of the elongator complex which is required for multiple tRNA modifications, including mcm5U (5-methoxycarbonylmethyl uridine), mcm5s2U (5-methoxycarbonylmethyl-2-thiouridine), and ncm5U (5-carbamoylmethyl uridine) (By similarity). In the elongator complex, acts as a tRNA uridine(34) acetyltransferase by mediating formation of carboxymethyluridine in the wobble base at position 34 in tRNAs (By similarity). May also act as a protein lysine acetyltransferase by mediating acetylation of target proteins; such activity is however unclear in vivo and recent evidences suggest that ELP3 primarily acts as a tRNA acetyltransferase. Involved in neurogenesis: regulates the migration and branching of projection neurons in the developing cerebral cortex, through a process depending on alpha-tubulin acetylation (By similarity). Required for acetylation of GJA1 in the developing cerebral cortex (By similarity).</text>
</comment>
<comment type="catalytic activity">
    <reaction evidence="2">
        <text>uridine(34) in tRNA + acetyl-CoA + S-adenosyl-L-methionine + H2O = 5-(carboxymethyl)uridine(34) in tRNA + 5'-deoxyadenosine + L-methionine + CoA + 2 H(+)</text>
        <dbReference type="Rhea" id="RHEA:61020"/>
        <dbReference type="Rhea" id="RHEA-COMP:10407"/>
        <dbReference type="Rhea" id="RHEA-COMP:11727"/>
        <dbReference type="ChEBI" id="CHEBI:15377"/>
        <dbReference type="ChEBI" id="CHEBI:15378"/>
        <dbReference type="ChEBI" id="CHEBI:17319"/>
        <dbReference type="ChEBI" id="CHEBI:57287"/>
        <dbReference type="ChEBI" id="CHEBI:57288"/>
        <dbReference type="ChEBI" id="CHEBI:57844"/>
        <dbReference type="ChEBI" id="CHEBI:59789"/>
        <dbReference type="ChEBI" id="CHEBI:65315"/>
        <dbReference type="ChEBI" id="CHEBI:74882"/>
        <dbReference type="EC" id="2.3.1.311"/>
    </reaction>
    <physiologicalReaction direction="left-to-right" evidence="2">
        <dbReference type="Rhea" id="RHEA:61021"/>
    </physiologicalReaction>
</comment>
<comment type="cofactor">
    <cofactor evidence="3">
        <name>[4Fe-4S] cluster</name>
        <dbReference type="ChEBI" id="CHEBI:49883"/>
    </cofactor>
    <text evidence="3">Binds 1 [4Fe-4S] cluster. The cluster is coordinated with 3 cysteines and an exchangeable S-adenosyl-L-methionine.</text>
</comment>
<comment type="pathway">
    <text evidence="5">tRNA modification; 5-methoxycarbonylmethyl-2-thiouridine-tRNA biosynthesis.</text>
</comment>
<comment type="subunit">
    <text evidence="5">Component of the elongator complex which consists of ELP1, ELP2, ELP3, ELP4, ELP5 and ELP6. ELP1, ELP2 and ELP3 form the elongator core complex. Interacts with alpha-tubulin.</text>
</comment>
<comment type="subcellular location">
    <subcellularLocation>
        <location evidence="5">Cytoplasm</location>
    </subcellularLocation>
    <subcellularLocation>
        <location evidence="5">Nucleus</location>
    </subcellularLocation>
</comment>
<comment type="PTM">
    <text evidence="5">Tyrosine-phosphorylated; phosphorylation on Tyr-202 does not affect elongator complex integrity or ELP3 protein stability. Also serine/threonine-phosphorylated.</text>
</comment>
<comment type="similarity">
    <text evidence="8">Belongs to the ELP3 family.</text>
</comment>
<comment type="caution">
    <text evidence="5">The elongator complex was originally thought to play a role in transcription elongation. However, it is no longer thought to play a direct role in this process and its primary function is thought to be in tRNA modification.</text>
</comment>
<comment type="caution">
    <text evidence="4 5">The relevance of the protein lysine acetyltransferase activity is unclear (By similarity). The publication reporting acetylation of GJA1 does not provide direct evidence of lysine acetyltransferase activity of ELP3 (By similarity).</text>
</comment>
<sequence>MRQKRKGDLSPAQLMMLTIGDVIKQLIEAHEQGKDIDLNKVKTRTAAKYGLSAQPRLVDIIAAVPPQYRKVLVPKLKAKPIRTASGIAVVAVMCKPHRCPHISFTGNICVYCPGGPDSDFEYSTQSYTGYEPTSMRAIRARYDPYLQTRHRIEQLKQLGHSVDKVEFIVMGGTFMALPEEYRDYFIRNLHDALSGHTSNNIYEAVKYSERSLTKCIGITIETRPDYCMKRHLSDMLTYGCTRLEIGVQSVYEDVARDTNRGHTVKAVCESFHLAKDSGFKVVAHMMPDLPNVGLERDIEQFTEFFENPAFRPDGLKLYPTLVIRGTGLYELWKSGRYKSYSPSDLIELVARILALVPPWTRVYRVQRDIPMPLVSSGVEHGNLRELAFARMKDLGIQCRDVRTREVGIQEIHHKVRPYQVELVRRDYVANGGWETFLSYEDPDQDILIGLLRLRKCSEETFRFELVGGVSIVRELHVYGSVVPVSSRDPTKFQHQGFGMLLMEEAERIAREEHGSGKIAVISGVGTRNYYRKIGYRLQGPYMVKTLE</sequence>
<gene>
    <name evidence="5" type="primary">ELP3</name>
</gene>
<reference key="1">
    <citation type="submission" date="2005-09" db="EMBL/GenBank/DDBJ databases">
        <authorList>
            <consortium name="NIH - Mammalian Gene Collection (MGC) project"/>
        </authorList>
    </citation>
    <scope>NUCLEOTIDE SEQUENCE [LARGE SCALE MRNA]</scope>
    <source>
        <strain>Hereford</strain>
        <tissue>Fetal liver</tissue>
    </source>
</reference>
<dbReference type="EC" id="2.3.1.311" evidence="2"/>
<dbReference type="EMBL" id="BC105500">
    <property type="protein sequence ID" value="AAI05501.2"/>
    <property type="molecule type" value="mRNA"/>
</dbReference>
<dbReference type="RefSeq" id="NP_001124234.1">
    <property type="nucleotide sequence ID" value="NM_001130762.1"/>
</dbReference>
<dbReference type="SMR" id="Q2KJ61"/>
<dbReference type="FunCoup" id="Q2KJ61">
    <property type="interactions" value="5354"/>
</dbReference>
<dbReference type="STRING" id="9913.ENSBTAP00000003541"/>
<dbReference type="PaxDb" id="9913-ENSBTAP00000003541"/>
<dbReference type="GeneID" id="784720"/>
<dbReference type="KEGG" id="bta:784720"/>
<dbReference type="CTD" id="55140"/>
<dbReference type="VEuPathDB" id="HostDB:ENSBTAG00000002730"/>
<dbReference type="eggNOG" id="KOG2535">
    <property type="taxonomic scope" value="Eukaryota"/>
</dbReference>
<dbReference type="HOGENOM" id="CLU_025983_2_1_1"/>
<dbReference type="InParanoid" id="Q2KJ61"/>
<dbReference type="OMA" id="TFETRPD"/>
<dbReference type="OrthoDB" id="10265243at2759"/>
<dbReference type="TreeFam" id="TF105752"/>
<dbReference type="UniPathway" id="UPA00988"/>
<dbReference type="Proteomes" id="UP000009136">
    <property type="component" value="Chromosome 8"/>
</dbReference>
<dbReference type="Bgee" id="ENSBTAG00000002730">
    <property type="expression patterns" value="Expressed in choroid plexus and 105 other cell types or tissues"/>
</dbReference>
<dbReference type="GO" id="GO:0005737">
    <property type="term" value="C:cytoplasm"/>
    <property type="evidence" value="ECO:0000250"/>
    <property type="project" value="UniProtKB"/>
</dbReference>
<dbReference type="GO" id="GO:0033588">
    <property type="term" value="C:elongator holoenzyme complex"/>
    <property type="evidence" value="ECO:0000250"/>
    <property type="project" value="UniProtKB"/>
</dbReference>
<dbReference type="GO" id="GO:0005634">
    <property type="term" value="C:nucleus"/>
    <property type="evidence" value="ECO:0000318"/>
    <property type="project" value="GO_Central"/>
</dbReference>
<dbReference type="GO" id="GO:0051539">
    <property type="term" value="F:4 iron, 4 sulfur cluster binding"/>
    <property type="evidence" value="ECO:0007669"/>
    <property type="project" value="UniProtKB-KW"/>
</dbReference>
<dbReference type="GO" id="GO:0046872">
    <property type="term" value="F:metal ion binding"/>
    <property type="evidence" value="ECO:0007669"/>
    <property type="project" value="UniProtKB-KW"/>
</dbReference>
<dbReference type="GO" id="GO:0008607">
    <property type="term" value="F:phosphorylase kinase regulator activity"/>
    <property type="evidence" value="ECO:0000250"/>
    <property type="project" value="UniProtKB"/>
</dbReference>
<dbReference type="GO" id="GO:0000049">
    <property type="term" value="F:tRNA binding"/>
    <property type="evidence" value="ECO:0007669"/>
    <property type="project" value="UniProtKB-KW"/>
</dbReference>
<dbReference type="GO" id="GO:0106261">
    <property type="term" value="F:tRNA uridine(34) acetyltransferase activity"/>
    <property type="evidence" value="ECO:0000250"/>
    <property type="project" value="UniProtKB"/>
</dbReference>
<dbReference type="GO" id="GO:0007417">
    <property type="term" value="P:central nervous system development"/>
    <property type="evidence" value="ECO:0000250"/>
    <property type="project" value="UniProtKB"/>
</dbReference>
<dbReference type="GO" id="GO:0001764">
    <property type="term" value="P:neuron migration"/>
    <property type="evidence" value="ECO:0000250"/>
    <property type="project" value="UniProtKB"/>
</dbReference>
<dbReference type="GO" id="GO:0030335">
    <property type="term" value="P:positive regulation of cell migration"/>
    <property type="evidence" value="ECO:0000250"/>
    <property type="project" value="UniProtKB"/>
</dbReference>
<dbReference type="GO" id="GO:0006357">
    <property type="term" value="P:regulation of transcription by RNA polymerase II"/>
    <property type="evidence" value="ECO:0000250"/>
    <property type="project" value="UniProtKB"/>
</dbReference>
<dbReference type="GO" id="GO:0002926">
    <property type="term" value="P:tRNA wobble base 5-methoxycarbonylmethyl-2-thiouridinylation"/>
    <property type="evidence" value="ECO:0000318"/>
    <property type="project" value="GO_Central"/>
</dbReference>
<dbReference type="GO" id="GO:0002098">
    <property type="term" value="P:tRNA wobble uridine modification"/>
    <property type="evidence" value="ECO:0000250"/>
    <property type="project" value="UniProtKB"/>
</dbReference>
<dbReference type="CDD" id="cd01335">
    <property type="entry name" value="Radical_SAM"/>
    <property type="match status" value="1"/>
</dbReference>
<dbReference type="FunFam" id="3.40.630.30:FF:000003">
    <property type="entry name" value="Elongator complex protein 3"/>
    <property type="match status" value="1"/>
</dbReference>
<dbReference type="Gene3D" id="3.40.630.30">
    <property type="match status" value="1"/>
</dbReference>
<dbReference type="InterPro" id="IPR016181">
    <property type="entry name" value="Acyl_CoA_acyltransferase"/>
</dbReference>
<dbReference type="InterPro" id="IPR039661">
    <property type="entry name" value="ELP3"/>
</dbReference>
<dbReference type="InterPro" id="IPR034687">
    <property type="entry name" value="ELP3-like"/>
</dbReference>
<dbReference type="InterPro" id="IPR056591">
    <property type="entry name" value="ELP3-like_N"/>
</dbReference>
<dbReference type="InterPro" id="IPR006638">
    <property type="entry name" value="Elp3/MiaA/NifB-like_rSAM"/>
</dbReference>
<dbReference type="InterPro" id="IPR000182">
    <property type="entry name" value="GNAT_dom"/>
</dbReference>
<dbReference type="InterPro" id="IPR032432">
    <property type="entry name" value="Radical_SAM_C"/>
</dbReference>
<dbReference type="InterPro" id="IPR007197">
    <property type="entry name" value="rSAM"/>
</dbReference>
<dbReference type="NCBIfam" id="TIGR01211">
    <property type="entry name" value="ELP3"/>
    <property type="match status" value="1"/>
</dbReference>
<dbReference type="PANTHER" id="PTHR11135:SF0">
    <property type="entry name" value="ELONGATOR COMPLEX PROTEIN 3"/>
    <property type="match status" value="1"/>
</dbReference>
<dbReference type="PANTHER" id="PTHR11135">
    <property type="entry name" value="HISTONE ACETYLTRANSFERASE-RELATED"/>
    <property type="match status" value="1"/>
</dbReference>
<dbReference type="Pfam" id="PF23613">
    <property type="entry name" value="ELP3_N"/>
    <property type="match status" value="1"/>
</dbReference>
<dbReference type="Pfam" id="PF04055">
    <property type="entry name" value="Radical_SAM"/>
    <property type="match status" value="1"/>
</dbReference>
<dbReference type="Pfam" id="PF16199">
    <property type="entry name" value="Radical_SAM_C"/>
    <property type="match status" value="1"/>
</dbReference>
<dbReference type="PIRSF" id="PIRSF005669">
    <property type="entry name" value="Hist_AcTrfase_ELP3"/>
    <property type="match status" value="1"/>
</dbReference>
<dbReference type="SFLD" id="SFLDF00344">
    <property type="entry name" value="ELP3-like"/>
    <property type="match status" value="1"/>
</dbReference>
<dbReference type="SFLD" id="SFLDS00029">
    <property type="entry name" value="Radical_SAM"/>
    <property type="match status" value="1"/>
</dbReference>
<dbReference type="SMART" id="SM00729">
    <property type="entry name" value="Elp3"/>
    <property type="match status" value="1"/>
</dbReference>
<dbReference type="SUPFAM" id="SSF55729">
    <property type="entry name" value="Acyl-CoA N-acyltransferases (Nat)"/>
    <property type="match status" value="1"/>
</dbReference>
<dbReference type="SUPFAM" id="SSF102114">
    <property type="entry name" value="Radical SAM enzymes"/>
    <property type="match status" value="1"/>
</dbReference>
<dbReference type="PROSITE" id="PS51186">
    <property type="entry name" value="GNAT"/>
    <property type="match status" value="1"/>
</dbReference>
<dbReference type="PROSITE" id="PS51918">
    <property type="entry name" value="RADICAL_SAM"/>
    <property type="match status" value="1"/>
</dbReference>
<evidence type="ECO:0000250" key="1">
    <source>
        <dbReference type="UniProtKB" id="A0A1C7D1B7"/>
    </source>
</evidence>
<evidence type="ECO:0000250" key="2">
    <source>
        <dbReference type="UniProtKB" id="D5VRB9"/>
    </source>
</evidence>
<evidence type="ECO:0000250" key="3">
    <source>
        <dbReference type="UniProtKB" id="Q02908"/>
    </source>
</evidence>
<evidence type="ECO:0000250" key="4">
    <source>
        <dbReference type="UniProtKB" id="Q9CZX0"/>
    </source>
</evidence>
<evidence type="ECO:0000250" key="5">
    <source>
        <dbReference type="UniProtKB" id="Q9H9T3"/>
    </source>
</evidence>
<evidence type="ECO:0000255" key="6">
    <source>
        <dbReference type="PROSITE-ProRule" id="PRU00532"/>
    </source>
</evidence>
<evidence type="ECO:0000255" key="7">
    <source>
        <dbReference type="PROSITE-ProRule" id="PRU01266"/>
    </source>
</evidence>
<evidence type="ECO:0000305" key="8"/>
<proteinExistence type="evidence at transcript level"/>
<accession>Q2KJ61</accession>
<organism>
    <name type="scientific">Bos taurus</name>
    <name type="common">Bovine</name>
    <dbReference type="NCBI Taxonomy" id="9913"/>
    <lineage>
        <taxon>Eukaryota</taxon>
        <taxon>Metazoa</taxon>
        <taxon>Chordata</taxon>
        <taxon>Craniata</taxon>
        <taxon>Vertebrata</taxon>
        <taxon>Euteleostomi</taxon>
        <taxon>Mammalia</taxon>
        <taxon>Eutheria</taxon>
        <taxon>Laurasiatheria</taxon>
        <taxon>Artiodactyla</taxon>
        <taxon>Ruminantia</taxon>
        <taxon>Pecora</taxon>
        <taxon>Bovidae</taxon>
        <taxon>Bovinae</taxon>
        <taxon>Bos</taxon>
    </lineage>
</organism>